<accession>O31250</accession>
<keyword id="KW-0997">Cell inner membrane</keyword>
<keyword id="KW-1003">Cell membrane</keyword>
<keyword id="KW-0408">Iron</keyword>
<keyword id="KW-0472">Membrane</keyword>
<keyword id="KW-0479">Metal-binding</keyword>
<keyword id="KW-0503">Monooxygenase</keyword>
<keyword id="KW-0560">Oxidoreductase</keyword>
<keyword id="KW-0812">Transmembrane</keyword>
<keyword id="KW-1133">Transmembrane helix</keyword>
<dbReference type="EC" id="1.14.15.3"/>
<dbReference type="EMBL" id="AJ002316">
    <property type="protein sequence ID" value="CAA05333.1"/>
    <property type="molecule type" value="Genomic_DNA"/>
</dbReference>
<dbReference type="EMBL" id="CR543861">
    <property type="protein sequence ID" value="CAG68276.1"/>
    <property type="molecule type" value="Genomic_DNA"/>
</dbReference>
<dbReference type="RefSeq" id="WP_004925568.1">
    <property type="nucleotide sequence ID" value="NC_005966.1"/>
</dbReference>
<dbReference type="SMR" id="O31250"/>
<dbReference type="STRING" id="202950.GCA_001485005_01167"/>
<dbReference type="GeneID" id="45233825"/>
<dbReference type="KEGG" id="aci:ACIAD1411"/>
<dbReference type="eggNOG" id="COG3696">
    <property type="taxonomic scope" value="Bacteria"/>
</dbReference>
<dbReference type="HOGENOM" id="CLU_044462_1_0_6"/>
<dbReference type="OrthoDB" id="4759734at2"/>
<dbReference type="BioCyc" id="ASP62977:ACIAD_RS06515-MONOMER"/>
<dbReference type="UniPathway" id="UPA00191"/>
<dbReference type="Proteomes" id="UP000000430">
    <property type="component" value="Chromosome"/>
</dbReference>
<dbReference type="GO" id="GO:0005886">
    <property type="term" value="C:plasma membrane"/>
    <property type="evidence" value="ECO:0007669"/>
    <property type="project" value="UniProtKB-SubCell"/>
</dbReference>
<dbReference type="GO" id="GO:0018685">
    <property type="term" value="F:alkane 1-monooxygenase activity"/>
    <property type="evidence" value="ECO:0000250"/>
    <property type="project" value="UniProtKB"/>
</dbReference>
<dbReference type="GO" id="GO:0046872">
    <property type="term" value="F:metal ion binding"/>
    <property type="evidence" value="ECO:0007669"/>
    <property type="project" value="UniProtKB-KW"/>
</dbReference>
<dbReference type="GO" id="GO:0043448">
    <property type="term" value="P:alkane catabolic process"/>
    <property type="evidence" value="ECO:0000250"/>
    <property type="project" value="UniProtKB"/>
</dbReference>
<dbReference type="GO" id="GO:0006629">
    <property type="term" value="P:lipid metabolic process"/>
    <property type="evidence" value="ECO:0007669"/>
    <property type="project" value="InterPro"/>
</dbReference>
<dbReference type="CDD" id="cd03512">
    <property type="entry name" value="Alkane-hydroxylase"/>
    <property type="match status" value="1"/>
</dbReference>
<dbReference type="InterPro" id="IPR033885">
    <property type="entry name" value="AlkB/XylM"/>
</dbReference>
<dbReference type="InterPro" id="IPR005804">
    <property type="entry name" value="FA_desaturase_dom"/>
</dbReference>
<dbReference type="PANTHER" id="PTHR38674">
    <property type="entry name" value="ALKANE 1-MONOOXYGENASE 1"/>
    <property type="match status" value="1"/>
</dbReference>
<dbReference type="PANTHER" id="PTHR38674:SF1">
    <property type="entry name" value="ALKANE 1-MONOOXYGENASE 1"/>
    <property type="match status" value="1"/>
</dbReference>
<dbReference type="Pfam" id="PF00487">
    <property type="entry name" value="FA_desaturase"/>
    <property type="match status" value="1"/>
</dbReference>
<name>ALKB_ACIAD</name>
<gene>
    <name type="primary">alkB</name>
    <name type="synonym">alkM</name>
    <name type="ordered locus">ACIAD1411</name>
</gene>
<feature type="chain" id="PRO_0000392215" description="Alkane 1-monooxygenase">
    <location>
        <begin position="1"/>
        <end position="408"/>
    </location>
</feature>
<feature type="transmembrane region" description="Helical" evidence="2">
    <location>
        <begin position="30"/>
        <end position="50"/>
    </location>
</feature>
<feature type="transmembrane region" description="Helical" evidence="2">
    <location>
        <begin position="58"/>
        <end position="78"/>
    </location>
</feature>
<feature type="transmembrane region" description="Helical" evidence="2">
    <location>
        <begin position="102"/>
        <end position="122"/>
    </location>
</feature>
<feature type="transmembrane region" description="Helical" evidence="2">
    <location>
        <begin position="126"/>
        <end position="146"/>
    </location>
</feature>
<feature type="transmembrane region" description="Helical" evidence="2">
    <location>
        <begin position="254"/>
        <end position="274"/>
    </location>
</feature>
<feature type="binding site" evidence="1">
    <location>
        <position position="150"/>
    </location>
    <ligand>
        <name>Fe cation</name>
        <dbReference type="ChEBI" id="CHEBI:24875"/>
        <label>1</label>
    </ligand>
</feature>
<feature type="binding site" evidence="1">
    <location>
        <position position="154"/>
    </location>
    <ligand>
        <name>Fe cation</name>
        <dbReference type="ChEBI" id="CHEBI:24875"/>
        <label>1</label>
    </ligand>
</feature>
<feature type="binding site" evidence="1">
    <location>
        <position position="180"/>
    </location>
    <ligand>
        <name>Fe cation</name>
        <dbReference type="ChEBI" id="CHEBI:24875"/>
        <label>1</label>
    </ligand>
</feature>
<feature type="binding site" evidence="1">
    <location>
        <position position="184"/>
    </location>
    <ligand>
        <name>Fe cation</name>
        <dbReference type="ChEBI" id="CHEBI:24875"/>
        <label>1</label>
    </ligand>
</feature>
<feature type="binding site" evidence="1">
    <location>
        <position position="185"/>
    </location>
    <ligand>
        <name>Fe cation</name>
        <dbReference type="ChEBI" id="CHEBI:24875"/>
        <label>2</label>
    </ligand>
</feature>
<feature type="binding site" evidence="1">
    <location>
        <position position="324"/>
    </location>
    <ligand>
        <name>Fe cation</name>
        <dbReference type="ChEBI" id="CHEBI:24875"/>
        <label>2</label>
    </ligand>
</feature>
<feature type="binding site" evidence="1">
    <location>
        <position position="327"/>
    </location>
    <ligand>
        <name>Fe cation</name>
        <dbReference type="ChEBI" id="CHEBI:24875"/>
        <label>2</label>
    </ligand>
</feature>
<feature type="binding site" evidence="1">
    <location>
        <position position="328"/>
    </location>
    <ligand>
        <name>Fe cation</name>
        <dbReference type="ChEBI" id="CHEBI:24875"/>
        <label>2</label>
    </ligand>
</feature>
<reference key="1">
    <citation type="journal article" date="1998" name="Appl. Environ. Microbiol.">
        <title>Alkane hydroxylase from Acinetobacter sp. strain ADP1 is encoded by alkM and belongs to a new family of bacterial integral-membrane hydrocarbon hydroxylases.</title>
        <authorList>
            <person name="Ratajczak A."/>
            <person name="Geissdorfer W."/>
            <person name="Hillen W."/>
        </authorList>
    </citation>
    <scope>NUCLEOTIDE SEQUENCE [GENOMIC DNA]</scope>
</reference>
<reference key="2">
    <citation type="journal article" date="2004" name="Nucleic Acids Res.">
        <title>Unique features revealed by the genome sequence of Acinetobacter sp. ADP1, a versatile and naturally transformation competent bacterium.</title>
        <authorList>
            <person name="Barbe V."/>
            <person name="Vallenet D."/>
            <person name="Fonknechten N."/>
            <person name="Kreimeyer A."/>
            <person name="Oztas S."/>
            <person name="Labarre L."/>
            <person name="Cruveiller S."/>
            <person name="Robert C."/>
            <person name="Duprat S."/>
            <person name="Wincker P."/>
            <person name="Ornston L.N."/>
            <person name="Weissenbach J."/>
            <person name="Marliere P."/>
            <person name="Cohen G.N."/>
            <person name="Medigue C."/>
        </authorList>
    </citation>
    <scope>NUCLEOTIDE SEQUENCE [LARGE SCALE GENOMIC DNA]</scope>
    <source>
        <strain>ATCC 33305 / BD413 / ADP1</strain>
    </source>
</reference>
<reference key="3">
    <citation type="journal article" date="1998" name="J. Bacteriol.">
        <title>Expression of alkane hydroxylase from Acinetobacter sp. Strain ADP1 is induced by a broad range of n-alkanes and requires the transcriptional activator AlkR.</title>
        <authorList>
            <person name="Ratajczak A."/>
            <person name="Geissdorfer W."/>
            <person name="Hillen W."/>
        </authorList>
    </citation>
    <scope>FUNCTION ALKANE DEGRADATION</scope>
    <scope>SUBSTRATE SPECIFICITY</scope>
    <scope>INDUCTION</scope>
</reference>
<comment type="function">
    <text evidence="3">Catalyzes the hydroxylation of n-alkanes in the presence of a NADH-rubredoxin reductase and rubredoxin. It preferably hydroxylases long-chain-length alkanes with at least 12 carbon atoms.</text>
</comment>
<comment type="catalytic activity">
    <reaction>
        <text>octane + 2 reduced [rubredoxin] + O2 + 2 H(+) = 2 oxidized [rubredoxin] + octan-1-ol + H2O</text>
        <dbReference type="Rhea" id="RHEA:19341"/>
        <dbReference type="Rhea" id="RHEA-COMP:10302"/>
        <dbReference type="Rhea" id="RHEA-COMP:10303"/>
        <dbReference type="ChEBI" id="CHEBI:15377"/>
        <dbReference type="ChEBI" id="CHEBI:15378"/>
        <dbReference type="ChEBI" id="CHEBI:15379"/>
        <dbReference type="ChEBI" id="CHEBI:16188"/>
        <dbReference type="ChEBI" id="CHEBI:17590"/>
        <dbReference type="ChEBI" id="CHEBI:29033"/>
        <dbReference type="ChEBI" id="CHEBI:29034"/>
        <dbReference type="EC" id="1.14.15.3"/>
    </reaction>
</comment>
<comment type="cofactor">
    <cofactor evidence="1">
        <name>Fe(3+)</name>
        <dbReference type="ChEBI" id="CHEBI:29034"/>
    </cofactor>
    <text evidence="1">Binds 2 Fe(3+) ions per subunit.</text>
</comment>
<comment type="pathway">
    <text>Hydrocarbon metabolism; alkane degradation.</text>
</comment>
<comment type="subcellular location">
    <subcellularLocation>
        <location evidence="4">Cell inner membrane</location>
        <topology evidence="4">Multi-pass membrane protein</topology>
    </subcellularLocation>
</comment>
<comment type="induction">
    <text evidence="3">Induced by AlkR and n-alkanes only in stationary phase. Repressed by oxidized alkane derivatives.</text>
</comment>
<comment type="similarity">
    <text evidence="4">Belongs to the fatty acid desaturase type 1 family. AlkB subfamily.</text>
</comment>
<sequence>MNAPVHVDQNFEEVINAARSMREIDRKRYLWMISPALPVIGIGILAGYQFSPRPIKKIFALGGPIVLHIIIPVIDTIIGKDASNPTSEEIKQLENDPYYARLVKSFIPLQYIANVYACYLVSRKKTSFIDKILLGISMGAINGIAVNTAHELSHKADRLDHILSHLALVPTGYNHFRIEHPYGHHKRAATPEDPASSQMGETFYEFWPRTVFGSLKSAIEIETHRLKRKGKKFWSKDNELLQGWGMSAAFHSSIIAIFGKGTIPYLVTQAFYGISLFEIINYIEHYGLKRQKRADGNYERTMPEHSWNNNNIVTNLFLYQLQRHSDHHAYPTRPFQALRHFDEAPELPSGYASMLLPAMIPPLWFKMMDKRVFEHYKEDLTKANIYPKRRAKILAKFGLTDPNIENGK</sequence>
<evidence type="ECO:0000250" key="1"/>
<evidence type="ECO:0000255" key="2"/>
<evidence type="ECO:0000269" key="3">
    <source>
    </source>
</evidence>
<evidence type="ECO:0000305" key="4"/>
<organism>
    <name type="scientific">Acinetobacter baylyi (strain ATCC 33305 / BD413 / ADP1)</name>
    <dbReference type="NCBI Taxonomy" id="62977"/>
    <lineage>
        <taxon>Bacteria</taxon>
        <taxon>Pseudomonadati</taxon>
        <taxon>Pseudomonadota</taxon>
        <taxon>Gammaproteobacteria</taxon>
        <taxon>Moraxellales</taxon>
        <taxon>Moraxellaceae</taxon>
        <taxon>Acinetobacter</taxon>
    </lineage>
</organism>
<proteinExistence type="evidence at transcript level"/>
<protein>
    <recommendedName>
        <fullName>Alkane 1-monooxygenase</fullName>
        <ecNumber>1.14.15.3</ecNumber>
    </recommendedName>
    <alternativeName>
        <fullName>Alkane hydroxylase</fullName>
        <shortName>AHs</shortName>
    </alternativeName>
    <alternativeName>
        <fullName>Terminal alkane hydroxylase</fullName>
    </alternativeName>
</protein>